<comment type="interaction">
    <interactant intactId="EBI-4427748">
        <id>Q7XJU2</id>
    </interactant>
    <interactant intactId="EBI-4442198">
        <id>Q93Y00</id>
        <label>BHLH7</label>
    </interactant>
    <organismsDiffer>false</organismsDiffer>
    <experiments>4</experiments>
</comment>
<comment type="interaction">
    <interactant intactId="EBI-4427748">
        <id>Q7XJU2</id>
    </interactant>
    <interactant intactId="EBI-4426649">
        <id>Q17TI5</id>
        <label>BRX</label>
    </interactant>
    <organismsDiffer>false</organismsDiffer>
    <experiments>5</experiments>
</comment>
<comment type="interaction">
    <interactant intactId="EBI-4427748">
        <id>Q7XJU2</id>
    </interactant>
    <interactant intactId="EBI-4424877">
        <id>Q9S7W5</id>
        <label>TCP13</label>
    </interactant>
    <organismsDiffer>false</organismsDiffer>
    <experiments>3</experiments>
</comment>
<comment type="interaction">
    <interactant intactId="EBI-4427748">
        <id>Q7XJU2</id>
    </interactant>
    <interactant intactId="EBI-4424563">
        <id>Q93Z00</id>
        <label>TCP14</label>
    </interactant>
    <organismsDiffer>false</organismsDiffer>
    <experiments>3</experiments>
</comment>
<comment type="interaction">
    <interactant intactId="EBI-4427748">
        <id>Q7XJU2</id>
    </interactant>
    <interactant intactId="EBI-4426144">
        <id>Q9C9L2</id>
        <label>TCP15</label>
    </interactant>
    <organismsDiffer>false</organismsDiffer>
    <experiments>3</experiments>
</comment>
<comment type="interaction">
    <interactant intactId="EBI-4427748">
        <id>Q7XJU2</id>
    </interactant>
    <interactant intactId="EBI-15192297">
        <id>Q9LQF0</id>
        <label>TCP23</label>
    </interactant>
    <organismsDiffer>false</organismsDiffer>
    <experiments>3</experiments>
</comment>
<comment type="interaction">
    <interactant intactId="EBI-4427748">
        <id>Q7XJU2</id>
    </interactant>
    <interactant intactId="EBI-15192325">
        <id>Q8LPR5</id>
        <label>TCP4</label>
    </interactant>
    <organismsDiffer>false</organismsDiffer>
    <experiments>3</experiments>
</comment>
<comment type="interaction">
    <interactant intactId="EBI-4427748">
        <id>Q7XJU2</id>
    </interactant>
    <interactant intactId="EBI-15192677">
        <id>Q9FMX2</id>
        <label>TCP7</label>
    </interactant>
    <organismsDiffer>false</organismsDiffer>
    <experiments>3</experiments>
</comment>
<comment type="interaction">
    <interactant intactId="EBI-4427748">
        <id>Q7XJU2</id>
    </interactant>
    <interactant intactId="EBI-9838721">
        <id>O64647</id>
        <label>TCP9</label>
    </interactant>
    <organismsDiffer>false</organismsDiffer>
    <experiments>3</experiments>
</comment>
<comment type="subcellular location">
    <subcellularLocation>
        <location evidence="1">Nucleus</location>
    </subcellularLocation>
</comment>
<comment type="alternative products">
    <event type="alternative splicing"/>
    <isoform>
        <id>Q7XJU2-1</id>
        <name>1</name>
        <sequence type="displayed"/>
    </isoform>
    <isoform>
        <id>Q7XJU2-2</id>
        <name>2</name>
        <sequence type="described" ref="VSP_058844"/>
    </isoform>
</comment>
<comment type="miscellaneous">
    <molecule>Isoform 2</molecule>
    <text evidence="3">May be due to intron retention.</text>
</comment>
<comment type="similarity">
    <text evidence="3">Belongs to the bHLH protein family.</text>
</comment>
<comment type="sequence caution" evidence="3">
    <conflict type="erroneous gene model prediction">
        <sequence resource="EMBL-CDS" id="AAD30624"/>
    </conflict>
</comment>
<comment type="sequence caution" evidence="3">
    <conflict type="erroneous initiation">
        <sequence resource="EMBL-CDS" id="AAM65410"/>
    </conflict>
    <text>Truncated N-terminus.</text>
</comment>
<protein>
    <recommendedName>
        <fullName>Transcription factor bHLH153</fullName>
    </recommendedName>
    <alternativeName>
        <fullName>BHLH transcription factor alpha</fullName>
        <shortName evidence="7">bHLH alpha</shortName>
    </alternativeName>
    <alternativeName>
        <fullName>Basic helix-loop-helix protein 153</fullName>
        <shortName evidence="2">AtbHLH153</shortName>
        <shortName>bHLH 153</shortName>
    </alternativeName>
    <alternativeName>
        <fullName>bHLH transcription factor bHLH153</fullName>
    </alternativeName>
</protein>
<proteinExistence type="evidence at protein level"/>
<reference key="1">
    <citation type="journal article" date="2003" name="Plant Cell">
        <title>Update on the basic helix-loop-helix transcription factor gene family in Arabidopsis thaliana.</title>
        <authorList>
            <person name="Bailey P.C."/>
            <person name="Martin C."/>
            <person name="Toledo-Ortiz G."/>
            <person name="Quail P.H."/>
            <person name="Huq E."/>
            <person name="Heim M.A."/>
            <person name="Jakoby M."/>
            <person name="Werber M."/>
            <person name="Weisshaar B."/>
        </authorList>
    </citation>
    <scope>NUCLEOTIDE SEQUENCE [MRNA] (ISOFORM 1)</scope>
    <scope>GENE FAMILY</scope>
    <scope>NOMENCLATURE</scope>
</reference>
<reference key="2">
    <citation type="journal article" date="2000" name="Nature">
        <title>Sequence and analysis of chromosome 1 of the plant Arabidopsis thaliana.</title>
        <authorList>
            <person name="Theologis A."/>
            <person name="Ecker J.R."/>
            <person name="Palm C.J."/>
            <person name="Federspiel N.A."/>
            <person name="Kaul S."/>
            <person name="White O."/>
            <person name="Alonso J."/>
            <person name="Altafi H."/>
            <person name="Araujo R."/>
            <person name="Bowman C.L."/>
            <person name="Brooks S.Y."/>
            <person name="Buehler E."/>
            <person name="Chan A."/>
            <person name="Chao Q."/>
            <person name="Chen H."/>
            <person name="Cheuk R.F."/>
            <person name="Chin C.W."/>
            <person name="Chung M.K."/>
            <person name="Conn L."/>
            <person name="Conway A.B."/>
            <person name="Conway A.R."/>
            <person name="Creasy T.H."/>
            <person name="Dewar K."/>
            <person name="Dunn P."/>
            <person name="Etgu P."/>
            <person name="Feldblyum T.V."/>
            <person name="Feng J.-D."/>
            <person name="Fong B."/>
            <person name="Fujii C.Y."/>
            <person name="Gill J.E."/>
            <person name="Goldsmith A.D."/>
            <person name="Haas B."/>
            <person name="Hansen N.F."/>
            <person name="Hughes B."/>
            <person name="Huizar L."/>
            <person name="Hunter J.L."/>
            <person name="Jenkins J."/>
            <person name="Johnson-Hopson C."/>
            <person name="Khan S."/>
            <person name="Khaykin E."/>
            <person name="Kim C.J."/>
            <person name="Koo H.L."/>
            <person name="Kremenetskaia I."/>
            <person name="Kurtz D.B."/>
            <person name="Kwan A."/>
            <person name="Lam B."/>
            <person name="Langin-Hooper S."/>
            <person name="Lee A."/>
            <person name="Lee J.M."/>
            <person name="Lenz C.A."/>
            <person name="Li J.H."/>
            <person name="Li Y.-P."/>
            <person name="Lin X."/>
            <person name="Liu S.X."/>
            <person name="Liu Z.A."/>
            <person name="Luros J.S."/>
            <person name="Maiti R."/>
            <person name="Marziali A."/>
            <person name="Militscher J."/>
            <person name="Miranda M."/>
            <person name="Nguyen M."/>
            <person name="Nierman W.C."/>
            <person name="Osborne B.I."/>
            <person name="Pai G."/>
            <person name="Peterson J."/>
            <person name="Pham P.K."/>
            <person name="Rizzo M."/>
            <person name="Rooney T."/>
            <person name="Rowley D."/>
            <person name="Sakano H."/>
            <person name="Salzberg S.L."/>
            <person name="Schwartz J.R."/>
            <person name="Shinn P."/>
            <person name="Southwick A.M."/>
            <person name="Sun H."/>
            <person name="Tallon L.J."/>
            <person name="Tambunga G."/>
            <person name="Toriumi M.J."/>
            <person name="Town C.D."/>
            <person name="Utterback T."/>
            <person name="Van Aken S."/>
            <person name="Vaysberg M."/>
            <person name="Vysotskaia V.S."/>
            <person name="Walker M."/>
            <person name="Wu D."/>
            <person name="Yu G."/>
            <person name="Fraser C.M."/>
            <person name="Venter J.C."/>
            <person name="Davis R.W."/>
        </authorList>
    </citation>
    <scope>NUCLEOTIDE SEQUENCE [LARGE SCALE GENOMIC DNA]</scope>
    <source>
        <strain>cv. Columbia</strain>
    </source>
</reference>
<reference key="3">
    <citation type="journal article" date="2017" name="Plant J.">
        <title>Araport11: a complete reannotation of the Arabidopsis thaliana reference genome.</title>
        <authorList>
            <person name="Cheng C.Y."/>
            <person name="Krishnakumar V."/>
            <person name="Chan A.P."/>
            <person name="Thibaud-Nissen F."/>
            <person name="Schobel S."/>
            <person name="Town C.D."/>
        </authorList>
    </citation>
    <scope>GENOME REANNOTATION</scope>
    <source>
        <strain>cv. Columbia</strain>
    </source>
</reference>
<reference key="4">
    <citation type="journal article" date="2003" name="Science">
        <title>Empirical analysis of transcriptional activity in the Arabidopsis genome.</title>
        <authorList>
            <person name="Yamada K."/>
            <person name="Lim J."/>
            <person name="Dale J.M."/>
            <person name="Chen H."/>
            <person name="Shinn P."/>
            <person name="Palm C.J."/>
            <person name="Southwick A.M."/>
            <person name="Wu H.C."/>
            <person name="Kim C.J."/>
            <person name="Nguyen M."/>
            <person name="Pham P.K."/>
            <person name="Cheuk R.F."/>
            <person name="Karlin-Newmann G."/>
            <person name="Liu S.X."/>
            <person name="Lam B."/>
            <person name="Sakano H."/>
            <person name="Wu T."/>
            <person name="Yu G."/>
            <person name="Miranda M."/>
            <person name="Quach H.L."/>
            <person name="Tripp M."/>
            <person name="Chang C.H."/>
            <person name="Lee J.M."/>
            <person name="Toriumi M.J."/>
            <person name="Chan M.M."/>
            <person name="Tang C.C."/>
            <person name="Onodera C.S."/>
            <person name="Deng J.M."/>
            <person name="Akiyama K."/>
            <person name="Ansari Y."/>
            <person name="Arakawa T."/>
            <person name="Banh J."/>
            <person name="Banno F."/>
            <person name="Bowser L."/>
            <person name="Brooks S.Y."/>
            <person name="Carninci P."/>
            <person name="Chao Q."/>
            <person name="Choy N."/>
            <person name="Enju A."/>
            <person name="Goldsmith A.D."/>
            <person name="Gurjal M."/>
            <person name="Hansen N.F."/>
            <person name="Hayashizaki Y."/>
            <person name="Johnson-Hopson C."/>
            <person name="Hsuan V.W."/>
            <person name="Iida K."/>
            <person name="Karnes M."/>
            <person name="Khan S."/>
            <person name="Koesema E."/>
            <person name="Ishida J."/>
            <person name="Jiang P.X."/>
            <person name="Jones T."/>
            <person name="Kawai J."/>
            <person name="Kamiya A."/>
            <person name="Meyers C."/>
            <person name="Nakajima M."/>
            <person name="Narusaka M."/>
            <person name="Seki M."/>
            <person name="Sakurai T."/>
            <person name="Satou M."/>
            <person name="Tamse R."/>
            <person name="Vaysberg M."/>
            <person name="Wallender E.K."/>
            <person name="Wong C."/>
            <person name="Yamamura Y."/>
            <person name="Yuan S."/>
            <person name="Shinozaki K."/>
            <person name="Davis R.W."/>
            <person name="Theologis A."/>
            <person name="Ecker J.R."/>
        </authorList>
    </citation>
    <scope>NUCLEOTIDE SEQUENCE [LARGE SCALE MRNA] (ISOFORM 2)</scope>
    <source>
        <strain>cv. Columbia</strain>
    </source>
</reference>
<reference key="5">
    <citation type="submission" date="2006-07" db="EMBL/GenBank/DDBJ databases">
        <title>Large-scale analysis of RIKEN Arabidopsis full-length (RAFL) cDNAs.</title>
        <authorList>
            <person name="Totoki Y."/>
            <person name="Seki M."/>
            <person name="Ishida J."/>
            <person name="Nakajima M."/>
            <person name="Enju A."/>
            <person name="Kamiya A."/>
            <person name="Narusaka M."/>
            <person name="Shin-i T."/>
            <person name="Nakagawa M."/>
            <person name="Sakamoto N."/>
            <person name="Oishi K."/>
            <person name="Kohara Y."/>
            <person name="Kobayashi M."/>
            <person name="Toyoda A."/>
            <person name="Sakaki Y."/>
            <person name="Sakurai T."/>
            <person name="Iida K."/>
            <person name="Akiyama K."/>
            <person name="Satou M."/>
            <person name="Toyoda T."/>
            <person name="Konagaya A."/>
            <person name="Carninci P."/>
            <person name="Kawai J."/>
            <person name="Hayashizaki Y."/>
            <person name="Shinozaki K."/>
        </authorList>
    </citation>
    <scope>NUCLEOTIDE SEQUENCE [LARGE SCALE MRNA] (ISOFORM 1)</scope>
    <source>
        <strain>cv. Columbia</strain>
    </source>
</reference>
<reference key="6">
    <citation type="submission" date="2002-03" db="EMBL/GenBank/DDBJ databases">
        <title>Full-length cDNA from Arabidopsis thaliana.</title>
        <authorList>
            <person name="Brover V.V."/>
            <person name="Troukhan M.E."/>
            <person name="Alexandrov N.A."/>
            <person name="Lu Y.-P."/>
            <person name="Flavell R.B."/>
            <person name="Feldmann K.A."/>
        </authorList>
    </citation>
    <scope>NUCLEOTIDE SEQUENCE [LARGE SCALE MRNA] (ISOFORM 1)</scope>
</reference>
<reference key="7">
    <citation type="journal article" date="2009" name="DNA Res.">
        <title>Analysis of multiple occurrences of alternative splicing events in Arabidopsis thaliana using novel sequenced full-length cDNAs.</title>
        <authorList>
            <person name="Iida K."/>
            <person name="Fukami-Kobayashi K."/>
            <person name="Toyoda A."/>
            <person name="Sakaki Y."/>
            <person name="Kobayashi M."/>
            <person name="Seki M."/>
            <person name="Shinozaki K."/>
        </authorList>
    </citation>
    <scope>NUCLEOTIDE SEQUENCE [LARGE SCALE MRNA] OF 5-149 (ISOFORM 1)</scope>
    <source>
        <strain>cv. Columbia</strain>
        <tissue evidence="6">Rosette leaf</tissue>
    </source>
</reference>
<feature type="chain" id="PRO_0000439391" description="Transcription factor bHLH153">
    <location>
        <begin position="1"/>
        <end position="149"/>
    </location>
</feature>
<feature type="domain" description="bHLH" evidence="1">
    <location>
        <begin position="27"/>
        <end position="76"/>
    </location>
</feature>
<feature type="splice variant" id="VSP_058844" description="In isoform 2.">
    <original>K</original>
    <variation>KVCSSIPSMIHSSLSEFPCSFVQ</variation>
    <location>
        <position position="81"/>
    </location>
</feature>
<feature type="sequence conflict" description="In Ref. 6; AAM65410." evidence="3" ref="6">
    <original>R</original>
    <variation>G</variation>
    <location>
        <position position="5"/>
    </location>
</feature>
<feature type="sequence conflict" description="In Ref. 6; AAM65410." evidence="3" ref="6">
    <original>S</original>
    <variation>N</variation>
    <location>
        <position position="35"/>
    </location>
</feature>
<feature type="sequence conflict" description="In Ref. 6; AAM65410." evidence="3" ref="6">
    <original>V</original>
    <variation>I</variation>
    <location>
        <position position="91"/>
    </location>
</feature>
<sequence>MEFSRDAGMMMENKRNVCSLGESSIKRHKSDLSFSSKERKDKVGERISALQQIVSPYGKTDTASVLLDAMHYIEFLHEQVKVLSAPYLQTVPDATQEELEQYSLRNRGLCLVPMENTVGVAQSNGADIWAPVKTPLSPAFSVTSQSPFR</sequence>
<dbReference type="EMBL" id="AJ576040">
    <property type="protein sequence ID" value="CAE09167.1"/>
    <property type="molecule type" value="mRNA"/>
</dbReference>
<dbReference type="EMBL" id="AC007153">
    <property type="protein sequence ID" value="AAD30624.1"/>
    <property type="status" value="ALT_SEQ"/>
    <property type="molecule type" value="Genomic_DNA"/>
</dbReference>
<dbReference type="EMBL" id="CP002684">
    <property type="protein sequence ID" value="AEE27879.1"/>
    <property type="molecule type" value="Genomic_DNA"/>
</dbReference>
<dbReference type="EMBL" id="CP002684">
    <property type="protein sequence ID" value="AEE27880.1"/>
    <property type="molecule type" value="Genomic_DNA"/>
</dbReference>
<dbReference type="EMBL" id="CP002684">
    <property type="protein sequence ID" value="AEE27882.1"/>
    <property type="molecule type" value="Genomic_DNA"/>
</dbReference>
<dbReference type="EMBL" id="CP002684">
    <property type="protein sequence ID" value="AEE27883.1"/>
    <property type="molecule type" value="Genomic_DNA"/>
</dbReference>
<dbReference type="EMBL" id="CP002684">
    <property type="protein sequence ID" value="AEE27881.1"/>
    <property type="molecule type" value="Genomic_DNA"/>
</dbReference>
<dbReference type="EMBL" id="CP002684">
    <property type="protein sequence ID" value="ANM60670.1"/>
    <property type="molecule type" value="Genomic_DNA"/>
</dbReference>
<dbReference type="EMBL" id="CP002684">
    <property type="protein sequence ID" value="ANM60671.1"/>
    <property type="molecule type" value="Genomic_DNA"/>
</dbReference>
<dbReference type="EMBL" id="CP002684">
    <property type="protein sequence ID" value="ANM60672.1"/>
    <property type="molecule type" value="Genomic_DNA"/>
</dbReference>
<dbReference type="EMBL" id="CP002684">
    <property type="protein sequence ID" value="ANM60673.1"/>
    <property type="molecule type" value="Genomic_DNA"/>
</dbReference>
<dbReference type="EMBL" id="CP002684">
    <property type="protein sequence ID" value="ANM60674.1"/>
    <property type="molecule type" value="Genomic_DNA"/>
</dbReference>
<dbReference type="EMBL" id="CP002684">
    <property type="protein sequence ID" value="ANM60675.1"/>
    <property type="molecule type" value="Genomic_DNA"/>
</dbReference>
<dbReference type="EMBL" id="AY072363">
    <property type="protein sequence ID" value="AAL62355.1"/>
    <property type="molecule type" value="mRNA"/>
</dbReference>
<dbReference type="EMBL" id="BT006558">
    <property type="protein sequence ID" value="AAP21366.1"/>
    <property type="molecule type" value="mRNA"/>
</dbReference>
<dbReference type="EMBL" id="AK230257">
    <property type="protein sequence ID" value="BAF02059.1"/>
    <property type="molecule type" value="mRNA"/>
</dbReference>
<dbReference type="EMBL" id="AY087858">
    <property type="protein sequence ID" value="AAM65410.1"/>
    <property type="status" value="ALT_INIT"/>
    <property type="molecule type" value="mRNA"/>
</dbReference>
<dbReference type="EMBL" id="AK317536">
    <property type="protein sequence ID" value="BAH20200.1"/>
    <property type="molecule type" value="mRNA"/>
</dbReference>
<dbReference type="PIR" id="D86191">
    <property type="entry name" value="D86191"/>
</dbReference>
<dbReference type="RefSeq" id="NP_001184916.1">
    <molecule id="Q7XJU2-1"/>
    <property type="nucleotide sequence ID" value="NM_001197987.1"/>
</dbReference>
<dbReference type="RefSeq" id="NP_001322940.1">
    <molecule id="Q7XJU2-2"/>
    <property type="nucleotide sequence ID" value="NM_001331570.1"/>
</dbReference>
<dbReference type="RefSeq" id="NP_001322941.1">
    <molecule id="Q7XJU2-1"/>
    <property type="nucleotide sequence ID" value="NM_001331568.1"/>
</dbReference>
<dbReference type="RefSeq" id="NP_001322942.1">
    <molecule id="Q7XJU2-2"/>
    <property type="nucleotide sequence ID" value="NM_001331567.1"/>
</dbReference>
<dbReference type="RefSeq" id="NP_001322943.1">
    <molecule id="Q7XJU2-1"/>
    <property type="nucleotide sequence ID" value="NM_001331566.1"/>
</dbReference>
<dbReference type="RefSeq" id="NP_001322944.1">
    <molecule id="Q7XJU2-1"/>
    <property type="nucleotide sequence ID" value="NM_001331565.1"/>
</dbReference>
<dbReference type="RefSeq" id="NP_001322945.1">
    <molecule id="Q7XJU2-2"/>
    <property type="nucleotide sequence ID" value="NM_001331564.1"/>
</dbReference>
<dbReference type="RefSeq" id="NP_563746.1">
    <molecule id="Q7XJU2-1"/>
    <property type="nucleotide sequence ID" value="NM_100451.4"/>
</dbReference>
<dbReference type="RefSeq" id="NP_849597.1">
    <molecule id="Q7XJU2-2"/>
    <property type="nucleotide sequence ID" value="NM_179266.3"/>
</dbReference>
<dbReference type="RefSeq" id="NP_973764.1">
    <molecule id="Q7XJU2-1"/>
    <property type="nucleotide sequence ID" value="NM_202035.4"/>
</dbReference>
<dbReference type="RefSeq" id="NP_973765.1">
    <molecule id="Q7XJU2-1"/>
    <property type="nucleotide sequence ID" value="NM_202036.3"/>
</dbReference>
<dbReference type="SMR" id="Q7XJU2"/>
<dbReference type="FunCoup" id="Q7XJU2">
    <property type="interactions" value="817"/>
</dbReference>
<dbReference type="IntAct" id="Q7XJU2">
    <property type="interactions" value="38"/>
</dbReference>
<dbReference type="STRING" id="3702.Q7XJU2"/>
<dbReference type="iPTMnet" id="Q7XJU2"/>
<dbReference type="ProteomicsDB" id="240685">
    <molecule id="Q7XJU2-1"/>
</dbReference>
<dbReference type="EnsemblPlants" id="AT1G05710.1">
    <molecule id="Q7XJU2-1"/>
    <property type="protein sequence ID" value="AT1G05710.1"/>
    <property type="gene ID" value="AT1G05710"/>
</dbReference>
<dbReference type="EnsemblPlants" id="AT1G05710.10">
    <molecule id="Q7XJU2-2"/>
    <property type="protein sequence ID" value="AT1G05710.10"/>
    <property type="gene ID" value="AT1G05710"/>
</dbReference>
<dbReference type="EnsemblPlants" id="AT1G05710.11">
    <molecule id="Q7XJU2-1"/>
    <property type="protein sequence ID" value="AT1G05710.11"/>
    <property type="gene ID" value="AT1G05710"/>
</dbReference>
<dbReference type="EnsemblPlants" id="AT1G05710.12">
    <molecule id="Q7XJU2-1"/>
    <property type="protein sequence ID" value="AT1G05710.12"/>
    <property type="gene ID" value="AT1G05710"/>
</dbReference>
<dbReference type="EnsemblPlants" id="AT1G05710.13">
    <molecule id="Q7XJU2-2"/>
    <property type="protein sequence ID" value="AT1G05710.13"/>
    <property type="gene ID" value="AT1G05710"/>
</dbReference>
<dbReference type="EnsemblPlants" id="AT1G05710.14">
    <molecule id="Q7XJU2-1"/>
    <property type="protein sequence ID" value="AT1G05710.14"/>
    <property type="gene ID" value="AT1G05710"/>
</dbReference>
<dbReference type="EnsemblPlants" id="AT1G05710.2">
    <molecule id="Q7XJU2-2"/>
    <property type="protein sequence ID" value="AT1G05710.2"/>
    <property type="gene ID" value="AT1G05710"/>
</dbReference>
<dbReference type="EnsemblPlants" id="AT1G05710.3">
    <molecule id="Q7XJU2-1"/>
    <property type="protein sequence ID" value="AT1G05710.3"/>
    <property type="gene ID" value="AT1G05710"/>
</dbReference>
<dbReference type="EnsemblPlants" id="AT1G05710.4">
    <molecule id="Q7XJU2-1"/>
    <property type="protein sequence ID" value="AT1G05710.4"/>
    <property type="gene ID" value="AT1G05710"/>
</dbReference>
<dbReference type="EnsemblPlants" id="AT1G05710.5">
    <molecule id="Q7XJU2-1"/>
    <property type="protein sequence ID" value="AT1G05710.5"/>
    <property type="gene ID" value="AT1G05710"/>
</dbReference>
<dbReference type="EnsemblPlants" id="AT1G05710.7">
    <molecule id="Q7XJU2-2"/>
    <property type="protein sequence ID" value="AT1G05710.7"/>
    <property type="gene ID" value="AT1G05710"/>
</dbReference>
<dbReference type="GeneID" id="837078"/>
<dbReference type="Gramene" id="AT1G05710.1">
    <molecule id="Q7XJU2-1"/>
    <property type="protein sequence ID" value="AT1G05710.1"/>
    <property type="gene ID" value="AT1G05710"/>
</dbReference>
<dbReference type="Gramene" id="AT1G05710.10">
    <molecule id="Q7XJU2-2"/>
    <property type="protein sequence ID" value="AT1G05710.10"/>
    <property type="gene ID" value="AT1G05710"/>
</dbReference>
<dbReference type="Gramene" id="AT1G05710.11">
    <molecule id="Q7XJU2-1"/>
    <property type="protein sequence ID" value="AT1G05710.11"/>
    <property type="gene ID" value="AT1G05710"/>
</dbReference>
<dbReference type="Gramene" id="AT1G05710.12">
    <molecule id="Q7XJU2-1"/>
    <property type="protein sequence ID" value="AT1G05710.12"/>
    <property type="gene ID" value="AT1G05710"/>
</dbReference>
<dbReference type="Gramene" id="AT1G05710.13">
    <molecule id="Q7XJU2-2"/>
    <property type="protein sequence ID" value="AT1G05710.13"/>
    <property type="gene ID" value="AT1G05710"/>
</dbReference>
<dbReference type="Gramene" id="AT1G05710.14">
    <molecule id="Q7XJU2-1"/>
    <property type="protein sequence ID" value="AT1G05710.14"/>
    <property type="gene ID" value="AT1G05710"/>
</dbReference>
<dbReference type="Gramene" id="AT1G05710.2">
    <molecule id="Q7XJU2-2"/>
    <property type="protein sequence ID" value="AT1G05710.2"/>
    <property type="gene ID" value="AT1G05710"/>
</dbReference>
<dbReference type="Gramene" id="AT1G05710.3">
    <molecule id="Q7XJU2-1"/>
    <property type="protein sequence ID" value="AT1G05710.3"/>
    <property type="gene ID" value="AT1G05710"/>
</dbReference>
<dbReference type="Gramene" id="AT1G05710.4">
    <molecule id="Q7XJU2-1"/>
    <property type="protein sequence ID" value="AT1G05710.4"/>
    <property type="gene ID" value="AT1G05710"/>
</dbReference>
<dbReference type="Gramene" id="AT1G05710.5">
    <molecule id="Q7XJU2-1"/>
    <property type="protein sequence ID" value="AT1G05710.5"/>
    <property type="gene ID" value="AT1G05710"/>
</dbReference>
<dbReference type="Gramene" id="AT1G05710.7">
    <molecule id="Q7XJU2-2"/>
    <property type="protein sequence ID" value="AT1G05710.7"/>
    <property type="gene ID" value="AT1G05710"/>
</dbReference>
<dbReference type="KEGG" id="ath:AT1G05710"/>
<dbReference type="Araport" id="AT1G05710"/>
<dbReference type="TAIR" id="AT1G05710"/>
<dbReference type="InParanoid" id="Q7XJU2"/>
<dbReference type="PhylomeDB" id="Q7XJU2"/>
<dbReference type="PRO" id="PR:Q7XJU2"/>
<dbReference type="Proteomes" id="UP000006548">
    <property type="component" value="Chromosome 1"/>
</dbReference>
<dbReference type="ExpressionAtlas" id="Q7XJU2">
    <property type="expression patterns" value="baseline and differential"/>
</dbReference>
<dbReference type="GO" id="GO:0005634">
    <property type="term" value="C:nucleus"/>
    <property type="evidence" value="ECO:0007669"/>
    <property type="project" value="UniProtKB-SubCell"/>
</dbReference>
<dbReference type="GO" id="GO:0003677">
    <property type="term" value="F:DNA binding"/>
    <property type="evidence" value="ECO:0007669"/>
    <property type="project" value="UniProtKB-KW"/>
</dbReference>
<dbReference type="GO" id="GO:0003700">
    <property type="term" value="F:DNA-binding transcription factor activity"/>
    <property type="evidence" value="ECO:0000250"/>
    <property type="project" value="TAIR"/>
</dbReference>
<dbReference type="GO" id="GO:0046983">
    <property type="term" value="F:protein dimerization activity"/>
    <property type="evidence" value="ECO:0007669"/>
    <property type="project" value="InterPro"/>
</dbReference>
<dbReference type="CDD" id="cd11393">
    <property type="entry name" value="bHLH_AtbHLH_like"/>
    <property type="match status" value="1"/>
</dbReference>
<dbReference type="FunFam" id="4.10.280.10:FF:000075">
    <property type="entry name" value="Transcription factor bHLH113 family"/>
    <property type="match status" value="1"/>
</dbReference>
<dbReference type="Gene3D" id="4.10.280.10">
    <property type="entry name" value="Helix-loop-helix DNA-binding domain"/>
    <property type="match status" value="1"/>
</dbReference>
<dbReference type="InterPro" id="IPR045239">
    <property type="entry name" value="bHLH95_bHLH"/>
</dbReference>
<dbReference type="InterPro" id="IPR011598">
    <property type="entry name" value="bHLH_dom"/>
</dbReference>
<dbReference type="InterPro" id="IPR036638">
    <property type="entry name" value="HLH_DNA-bd_sf"/>
</dbReference>
<dbReference type="InterPro" id="IPR045843">
    <property type="entry name" value="IND-like"/>
</dbReference>
<dbReference type="PANTHER" id="PTHR16223:SF204">
    <property type="entry name" value="TRANSCRIPTION FACTOR BHLH153"/>
    <property type="match status" value="1"/>
</dbReference>
<dbReference type="PANTHER" id="PTHR16223">
    <property type="entry name" value="TRANSCRIPTION FACTOR BHLH83-RELATED"/>
    <property type="match status" value="1"/>
</dbReference>
<dbReference type="SUPFAM" id="SSF47459">
    <property type="entry name" value="HLH, helix-loop-helix DNA-binding domain"/>
    <property type="match status" value="1"/>
</dbReference>
<dbReference type="PROSITE" id="PS50888">
    <property type="entry name" value="BHLH"/>
    <property type="match status" value="1"/>
</dbReference>
<gene>
    <name evidence="2" type="primary">BHLH153</name>
    <name evidence="4" type="ordered locus">At1g05710</name>
    <name evidence="5" type="ORF">F3F20.16</name>
</gene>
<organism>
    <name type="scientific">Arabidopsis thaliana</name>
    <name type="common">Mouse-ear cress</name>
    <dbReference type="NCBI Taxonomy" id="3702"/>
    <lineage>
        <taxon>Eukaryota</taxon>
        <taxon>Viridiplantae</taxon>
        <taxon>Streptophyta</taxon>
        <taxon>Embryophyta</taxon>
        <taxon>Tracheophyta</taxon>
        <taxon>Spermatophyta</taxon>
        <taxon>Magnoliopsida</taxon>
        <taxon>eudicotyledons</taxon>
        <taxon>Gunneridae</taxon>
        <taxon>Pentapetalae</taxon>
        <taxon>rosids</taxon>
        <taxon>malvids</taxon>
        <taxon>Brassicales</taxon>
        <taxon>Brassicaceae</taxon>
        <taxon>Camelineae</taxon>
        <taxon>Arabidopsis</taxon>
    </lineage>
</organism>
<accession>Q7XJU2</accession>
<accession>B9DHI3</accession>
<accession>Q8LAF0</accession>
<accession>Q8VY82</accession>
<accession>Q9SYL2</accession>
<keyword id="KW-0025">Alternative splicing</keyword>
<keyword id="KW-0238">DNA-binding</keyword>
<keyword id="KW-0539">Nucleus</keyword>
<keyword id="KW-1185">Reference proteome</keyword>
<keyword id="KW-0804">Transcription</keyword>
<keyword id="KW-0805">Transcription regulation</keyword>
<name>BH153_ARATH</name>
<evidence type="ECO:0000255" key="1">
    <source>
        <dbReference type="PROSITE-ProRule" id="PRU00981"/>
    </source>
</evidence>
<evidence type="ECO:0000303" key="2">
    <source>
    </source>
</evidence>
<evidence type="ECO:0000305" key="3"/>
<evidence type="ECO:0000312" key="4">
    <source>
        <dbReference type="Araport" id="AT1G05710"/>
    </source>
</evidence>
<evidence type="ECO:0000312" key="5">
    <source>
        <dbReference type="EMBL" id="AAD30624.1"/>
    </source>
</evidence>
<evidence type="ECO:0000312" key="6">
    <source>
        <dbReference type="EMBL" id="BAH20200.1"/>
    </source>
</evidence>
<evidence type="ECO:0000312" key="7">
    <source>
        <dbReference type="EMBL" id="CAE09167.1"/>
    </source>
</evidence>